<sequence length="311" mass="34384">MANPLYQKHIISINDLSRDDLNLVLATAAKLKANPQPELLKHKVIASCFFEASTRTRLSFETSMHRLGASVVGFSDSANTSLGKKGETLADTISVISTYVDAIVMRHPQEGAARLATEFSGQVPVLNAGDGSNQHPTQTLLDLFTIQETQGRLDNLHIAMVGDLKYGRTVHSLTQALAKFSGNRFYFIAPDALAMPQYILDMLDEKGMAWSLHGSIEEVMADVDILYMTRVQKERLDPSEYANVKAQFVLRASDLNGARENMKVLHPLPRIDEITTDVDKTPHAWYFQQAGNGIFARQALLALVLNSELSL</sequence>
<reference key="1">
    <citation type="journal article" date="2011" name="J. Bacteriol.">
        <title>Comparative genomics of 28 Salmonella enterica isolates: evidence for CRISPR-mediated adaptive sublineage evolution.</title>
        <authorList>
            <person name="Fricke W.F."/>
            <person name="Mammel M.K."/>
            <person name="McDermott P.F."/>
            <person name="Tartera C."/>
            <person name="White D.G."/>
            <person name="Leclerc J.E."/>
            <person name="Ravel J."/>
            <person name="Cebula T.A."/>
        </authorList>
    </citation>
    <scope>NUCLEOTIDE SEQUENCE [LARGE SCALE GENOMIC DNA]</scope>
    <source>
        <strain>CVM19633</strain>
    </source>
</reference>
<name>PYRB_SALSV</name>
<accession>B4TT83</accession>
<evidence type="ECO:0000255" key="1">
    <source>
        <dbReference type="HAMAP-Rule" id="MF_00001"/>
    </source>
</evidence>
<comment type="function">
    <text evidence="1">Catalyzes the condensation of carbamoyl phosphate and aspartate to form carbamoyl aspartate and inorganic phosphate, the committed step in the de novo pyrimidine nucleotide biosynthesis pathway.</text>
</comment>
<comment type="catalytic activity">
    <reaction evidence="1">
        <text>carbamoyl phosphate + L-aspartate = N-carbamoyl-L-aspartate + phosphate + H(+)</text>
        <dbReference type="Rhea" id="RHEA:20013"/>
        <dbReference type="ChEBI" id="CHEBI:15378"/>
        <dbReference type="ChEBI" id="CHEBI:29991"/>
        <dbReference type="ChEBI" id="CHEBI:32814"/>
        <dbReference type="ChEBI" id="CHEBI:43474"/>
        <dbReference type="ChEBI" id="CHEBI:58228"/>
        <dbReference type="EC" id="2.1.3.2"/>
    </reaction>
</comment>
<comment type="pathway">
    <text evidence="1">Pyrimidine metabolism; UMP biosynthesis via de novo pathway; (S)-dihydroorotate from bicarbonate: step 2/3.</text>
</comment>
<comment type="subunit">
    <text evidence="1">Heterododecamer (2C3:3R2) of six catalytic PyrB chains organized as two trimers (C3), and six regulatory PyrI chains organized as three dimers (R2).</text>
</comment>
<comment type="similarity">
    <text evidence="1">Belongs to the aspartate/ornithine carbamoyltransferase superfamily. ATCase family.</text>
</comment>
<dbReference type="EC" id="2.1.3.2" evidence="1"/>
<dbReference type="EMBL" id="CP001127">
    <property type="protein sequence ID" value="ACF91582.1"/>
    <property type="molecule type" value="Genomic_DNA"/>
</dbReference>
<dbReference type="RefSeq" id="WP_000013055.1">
    <property type="nucleotide sequence ID" value="NC_011094.1"/>
</dbReference>
<dbReference type="SMR" id="B4TT83"/>
<dbReference type="KEGG" id="sew:SeSA_A4713"/>
<dbReference type="HOGENOM" id="CLU_043846_1_2_6"/>
<dbReference type="UniPathway" id="UPA00070">
    <property type="reaction ID" value="UER00116"/>
</dbReference>
<dbReference type="Proteomes" id="UP000001865">
    <property type="component" value="Chromosome"/>
</dbReference>
<dbReference type="GO" id="GO:0005829">
    <property type="term" value="C:cytosol"/>
    <property type="evidence" value="ECO:0007669"/>
    <property type="project" value="TreeGrafter"/>
</dbReference>
<dbReference type="GO" id="GO:0016597">
    <property type="term" value="F:amino acid binding"/>
    <property type="evidence" value="ECO:0007669"/>
    <property type="project" value="InterPro"/>
</dbReference>
<dbReference type="GO" id="GO:0004070">
    <property type="term" value="F:aspartate carbamoyltransferase activity"/>
    <property type="evidence" value="ECO:0007669"/>
    <property type="project" value="UniProtKB-UniRule"/>
</dbReference>
<dbReference type="GO" id="GO:0006207">
    <property type="term" value="P:'de novo' pyrimidine nucleobase biosynthetic process"/>
    <property type="evidence" value="ECO:0007669"/>
    <property type="project" value="InterPro"/>
</dbReference>
<dbReference type="GO" id="GO:0044205">
    <property type="term" value="P:'de novo' UMP biosynthetic process"/>
    <property type="evidence" value="ECO:0007669"/>
    <property type="project" value="UniProtKB-UniRule"/>
</dbReference>
<dbReference type="GO" id="GO:0006520">
    <property type="term" value="P:amino acid metabolic process"/>
    <property type="evidence" value="ECO:0007669"/>
    <property type="project" value="InterPro"/>
</dbReference>
<dbReference type="FunFam" id="3.40.50.1370:FF:000001">
    <property type="entry name" value="Aspartate carbamoyltransferase"/>
    <property type="match status" value="1"/>
</dbReference>
<dbReference type="FunFam" id="3.40.50.1370:FF:000002">
    <property type="entry name" value="Aspartate carbamoyltransferase 2"/>
    <property type="match status" value="1"/>
</dbReference>
<dbReference type="Gene3D" id="3.40.50.1370">
    <property type="entry name" value="Aspartate/ornithine carbamoyltransferase"/>
    <property type="match status" value="2"/>
</dbReference>
<dbReference type="HAMAP" id="MF_00001">
    <property type="entry name" value="Asp_carb_tr"/>
    <property type="match status" value="1"/>
</dbReference>
<dbReference type="InterPro" id="IPR006132">
    <property type="entry name" value="Asp/Orn_carbamoyltranf_P-bd"/>
</dbReference>
<dbReference type="InterPro" id="IPR006130">
    <property type="entry name" value="Asp/Orn_carbamoylTrfase"/>
</dbReference>
<dbReference type="InterPro" id="IPR036901">
    <property type="entry name" value="Asp/Orn_carbamoylTrfase_sf"/>
</dbReference>
<dbReference type="InterPro" id="IPR002082">
    <property type="entry name" value="Asp_carbamoyltransf"/>
</dbReference>
<dbReference type="InterPro" id="IPR006131">
    <property type="entry name" value="Asp_carbamoyltransf_Asp/Orn-bd"/>
</dbReference>
<dbReference type="NCBIfam" id="TIGR00670">
    <property type="entry name" value="asp_carb_tr"/>
    <property type="match status" value="1"/>
</dbReference>
<dbReference type="NCBIfam" id="NF002032">
    <property type="entry name" value="PRK00856.1"/>
    <property type="match status" value="1"/>
</dbReference>
<dbReference type="PANTHER" id="PTHR45753:SF6">
    <property type="entry name" value="ASPARTATE CARBAMOYLTRANSFERASE"/>
    <property type="match status" value="1"/>
</dbReference>
<dbReference type="PANTHER" id="PTHR45753">
    <property type="entry name" value="ORNITHINE CARBAMOYLTRANSFERASE, MITOCHONDRIAL"/>
    <property type="match status" value="1"/>
</dbReference>
<dbReference type="Pfam" id="PF00185">
    <property type="entry name" value="OTCace"/>
    <property type="match status" value="1"/>
</dbReference>
<dbReference type="Pfam" id="PF02729">
    <property type="entry name" value="OTCace_N"/>
    <property type="match status" value="1"/>
</dbReference>
<dbReference type="PRINTS" id="PR00100">
    <property type="entry name" value="AOTCASE"/>
</dbReference>
<dbReference type="PRINTS" id="PR00101">
    <property type="entry name" value="ATCASE"/>
</dbReference>
<dbReference type="SUPFAM" id="SSF53671">
    <property type="entry name" value="Aspartate/ornithine carbamoyltransferase"/>
    <property type="match status" value="1"/>
</dbReference>
<dbReference type="PROSITE" id="PS00097">
    <property type="entry name" value="CARBAMOYLTRANSFERASE"/>
    <property type="match status" value="1"/>
</dbReference>
<gene>
    <name evidence="1" type="primary">pyrB</name>
    <name type="ordered locus">SeSA_A4713</name>
</gene>
<feature type="chain" id="PRO_1000088801" description="Aspartate carbamoyltransferase catalytic subunit">
    <location>
        <begin position="1"/>
        <end position="311"/>
    </location>
</feature>
<feature type="binding site" evidence="1">
    <location>
        <position position="55"/>
    </location>
    <ligand>
        <name>carbamoyl phosphate</name>
        <dbReference type="ChEBI" id="CHEBI:58228"/>
    </ligand>
</feature>
<feature type="binding site" evidence="1">
    <location>
        <position position="56"/>
    </location>
    <ligand>
        <name>carbamoyl phosphate</name>
        <dbReference type="ChEBI" id="CHEBI:58228"/>
    </ligand>
</feature>
<feature type="binding site" evidence="1">
    <location>
        <position position="85"/>
    </location>
    <ligand>
        <name>L-aspartate</name>
        <dbReference type="ChEBI" id="CHEBI:29991"/>
    </ligand>
</feature>
<feature type="binding site" evidence="1">
    <location>
        <position position="106"/>
    </location>
    <ligand>
        <name>carbamoyl phosphate</name>
        <dbReference type="ChEBI" id="CHEBI:58228"/>
    </ligand>
</feature>
<feature type="binding site" evidence="1">
    <location>
        <position position="135"/>
    </location>
    <ligand>
        <name>carbamoyl phosphate</name>
        <dbReference type="ChEBI" id="CHEBI:58228"/>
    </ligand>
</feature>
<feature type="binding site" evidence="1">
    <location>
        <position position="138"/>
    </location>
    <ligand>
        <name>carbamoyl phosphate</name>
        <dbReference type="ChEBI" id="CHEBI:58228"/>
    </ligand>
</feature>
<feature type="binding site" evidence="1">
    <location>
        <position position="168"/>
    </location>
    <ligand>
        <name>L-aspartate</name>
        <dbReference type="ChEBI" id="CHEBI:29991"/>
    </ligand>
</feature>
<feature type="binding site" evidence="1">
    <location>
        <position position="230"/>
    </location>
    <ligand>
        <name>L-aspartate</name>
        <dbReference type="ChEBI" id="CHEBI:29991"/>
    </ligand>
</feature>
<feature type="binding site" evidence="1">
    <location>
        <position position="268"/>
    </location>
    <ligand>
        <name>carbamoyl phosphate</name>
        <dbReference type="ChEBI" id="CHEBI:58228"/>
    </ligand>
</feature>
<feature type="binding site" evidence="1">
    <location>
        <position position="269"/>
    </location>
    <ligand>
        <name>carbamoyl phosphate</name>
        <dbReference type="ChEBI" id="CHEBI:58228"/>
    </ligand>
</feature>
<organism>
    <name type="scientific">Salmonella schwarzengrund (strain CVM19633)</name>
    <dbReference type="NCBI Taxonomy" id="439843"/>
    <lineage>
        <taxon>Bacteria</taxon>
        <taxon>Pseudomonadati</taxon>
        <taxon>Pseudomonadota</taxon>
        <taxon>Gammaproteobacteria</taxon>
        <taxon>Enterobacterales</taxon>
        <taxon>Enterobacteriaceae</taxon>
        <taxon>Salmonella</taxon>
    </lineage>
</organism>
<proteinExistence type="inferred from homology"/>
<protein>
    <recommendedName>
        <fullName evidence="1">Aspartate carbamoyltransferase catalytic subunit</fullName>
        <ecNumber evidence="1">2.1.3.2</ecNumber>
    </recommendedName>
    <alternativeName>
        <fullName evidence="1">Aspartate transcarbamylase</fullName>
        <shortName evidence="1">ATCase</shortName>
    </alternativeName>
</protein>
<keyword id="KW-0665">Pyrimidine biosynthesis</keyword>
<keyword id="KW-0808">Transferase</keyword>